<sequence length="64" mass="7279">MATVKFKYKGEEKQVDISKIKKVWRVGKMISFTYDEGGGKTGRGAVSEKDAPKELLQMLEKQKK</sequence>
<gene>
    <name type="primary">sso7a1</name>
    <name type="synonym">sso7d-2</name>
    <name type="ordered locus">SSO9180</name>
</gene>
<gene>
    <name type="primary">sso7a2</name>
    <name type="synonym">sso7d-3</name>
    <name type="ordered locus">SSO9535</name>
</gene>
<keyword id="KW-0002">3D-structure</keyword>
<keyword id="KW-0013">ADP-ribosylation</keyword>
<keyword id="KW-0903">Direct protein sequencing</keyword>
<keyword id="KW-0238">DNA-binding</keyword>
<keyword id="KW-0255">Endonuclease</keyword>
<keyword id="KW-0378">Hydrolase</keyword>
<keyword id="KW-0488">Methylation</keyword>
<keyword id="KW-0540">Nuclease</keyword>
<keyword id="KW-1185">Reference proteome</keyword>
<proteinExistence type="evidence at protein level"/>
<organism>
    <name type="scientific">Saccharolobus solfataricus (strain ATCC 35092 / DSM 1617 / JCM 11322 / P2)</name>
    <name type="common">Sulfolobus solfataricus</name>
    <dbReference type="NCBI Taxonomy" id="273057"/>
    <lineage>
        <taxon>Archaea</taxon>
        <taxon>Thermoproteota</taxon>
        <taxon>Thermoprotei</taxon>
        <taxon>Sulfolobales</taxon>
        <taxon>Sulfolobaceae</taxon>
        <taxon>Saccharolobus</taxon>
    </lineage>
</organism>
<protein>
    <recommendedName>
        <fullName evidence="6">DNA-binding protein 7a</fullName>
    </recommendedName>
    <alternativeName>
        <fullName>7 kDa DNA-binding protein a</fullName>
    </alternativeName>
    <alternativeName>
        <fullName evidence="5">Endoribonuclease P2</fullName>
        <ecNumber>3.1.27.-</ecNumber>
    </alternativeName>
    <alternativeName>
        <fullName evidence="4">p7ss</fullName>
    </alternativeName>
</protein>
<name>DN7A_SACS2</name>
<accession>P61991</accession>
<accession>O59631</accession>
<accession>P80170</accession>
<accession>Q9UWI8</accession>
<dbReference type="EC" id="3.1.27.-"/>
<dbReference type="EMBL" id="AE006641">
    <property type="protein sequence ID" value="AAK42090.1"/>
    <property type="molecule type" value="Genomic_DNA"/>
</dbReference>
<dbReference type="EMBL" id="AE006641">
    <property type="protein sequence ID" value="AAK42212.1"/>
    <property type="molecule type" value="Genomic_DNA"/>
</dbReference>
<dbReference type="PIR" id="E90369">
    <property type="entry name" value="E90369"/>
</dbReference>
<dbReference type="PDB" id="1B4O">
    <property type="method" value="NMR"/>
    <property type="chains" value="A=2-63"/>
</dbReference>
<dbReference type="PDB" id="1JIC">
    <property type="method" value="NMR"/>
    <property type="chains" value="A=2-63"/>
</dbReference>
<dbReference type="PDB" id="1SSO">
    <property type="method" value="NMR"/>
    <property type="chains" value="A=2-63"/>
</dbReference>
<dbReference type="PDB" id="2CVR">
    <property type="method" value="NMR"/>
    <property type="chains" value="A=2-63"/>
</dbReference>
<dbReference type="PDB" id="6QBA">
    <property type="method" value="X-ray"/>
    <property type="resolution" value="1.80 A"/>
    <property type="chains" value="B=2-62"/>
</dbReference>
<dbReference type="PDBsum" id="1B4O"/>
<dbReference type="PDBsum" id="1JIC"/>
<dbReference type="PDBsum" id="1SSO"/>
<dbReference type="PDBsum" id="2CVR"/>
<dbReference type="PDBsum" id="6QBA"/>
<dbReference type="BMRB" id="P61991"/>
<dbReference type="SMR" id="P61991"/>
<dbReference type="STRING" id="273057.SSO9180"/>
<dbReference type="iPTMnet" id="P61991"/>
<dbReference type="PaxDb" id="273057-SSO9180"/>
<dbReference type="EnsemblBacteria" id="AAK42090">
    <property type="protein sequence ID" value="AAK42090"/>
    <property type="gene ID" value="SSO9180"/>
</dbReference>
<dbReference type="EnsemblBacteria" id="AAK42212">
    <property type="protein sequence ID" value="AAK42212"/>
    <property type="gene ID" value="SSO9535"/>
</dbReference>
<dbReference type="KEGG" id="sso:SSO9180"/>
<dbReference type="KEGG" id="sso:SSO9535"/>
<dbReference type="PATRIC" id="fig|273057.12.peg.1957"/>
<dbReference type="eggNOG" id="arCOG05888">
    <property type="taxonomic scope" value="Archaea"/>
</dbReference>
<dbReference type="HOGENOM" id="CLU_2929990_0_0_2"/>
<dbReference type="InParanoid" id="P61991"/>
<dbReference type="BRENDA" id="4.6.1.18">
    <property type="organism ID" value="6163"/>
</dbReference>
<dbReference type="EvolutionaryTrace" id="P61991"/>
<dbReference type="Proteomes" id="UP000001974">
    <property type="component" value="Chromosome"/>
</dbReference>
<dbReference type="GO" id="GO:0003677">
    <property type="term" value="F:DNA binding"/>
    <property type="evidence" value="ECO:0007669"/>
    <property type="project" value="UniProtKB-KW"/>
</dbReference>
<dbReference type="GO" id="GO:0004521">
    <property type="term" value="F:RNA endonuclease activity"/>
    <property type="evidence" value="ECO:0007669"/>
    <property type="project" value="InterPro"/>
</dbReference>
<dbReference type="Gene3D" id="2.40.50.40">
    <property type="match status" value="1"/>
</dbReference>
<dbReference type="InterPro" id="IPR016197">
    <property type="entry name" value="Chromo-like_dom_sf"/>
</dbReference>
<dbReference type="InterPro" id="IPR003212">
    <property type="entry name" value="DNA-bd_7a-e_arc"/>
</dbReference>
<dbReference type="NCBIfam" id="NF045555">
    <property type="entry name" value="Sul7d"/>
    <property type="match status" value="1"/>
</dbReference>
<dbReference type="Pfam" id="PF02294">
    <property type="entry name" value="7kD_DNA_binding"/>
    <property type="match status" value="1"/>
</dbReference>
<dbReference type="PIRSF" id="PIRSF036912">
    <property type="entry name" value="Sac7"/>
    <property type="match status" value="1"/>
</dbReference>
<dbReference type="SUPFAM" id="SSF54160">
    <property type="entry name" value="Chromo domain-like"/>
    <property type="match status" value="1"/>
</dbReference>
<reference key="1">
    <citation type="journal article" date="1993" name="Eur. J. Biochem.">
        <title>Ribonucleases from the extreme thermophilic archaebacterium S. solfataricus.</title>
        <authorList>
            <person name="Fusi P."/>
            <person name="Tedeschi G."/>
            <person name="Aliverti A."/>
            <person name="Ronchi S."/>
            <person name="Tortora P."/>
            <person name="Guerritore A."/>
        </authorList>
    </citation>
    <scope>PROTEIN SEQUENCE OF 2-63</scope>
    <scope>FUNCTION AS A RNASE</scope>
    <scope>METHYLATION AT LYS-5 AND LYS-7</scope>
    <scope>SUBUNIT</scope>
    <source>
        <strain>DSM 5833 / MT-4</strain>
    </source>
</reference>
<reference key="2">
    <citation type="journal article" date="2001" name="Proc. Natl. Acad. Sci. U.S.A.">
        <title>The complete genome of the crenarchaeon Sulfolobus solfataricus P2.</title>
        <authorList>
            <person name="She Q."/>
            <person name="Singh R.K."/>
            <person name="Confalonieri F."/>
            <person name="Zivanovic Y."/>
            <person name="Allard G."/>
            <person name="Awayez M.J."/>
            <person name="Chan-Weiher C.C.-Y."/>
            <person name="Clausen I.G."/>
            <person name="Curtis B.A."/>
            <person name="De Moors A."/>
            <person name="Erauso G."/>
            <person name="Fletcher C."/>
            <person name="Gordon P.M.K."/>
            <person name="Heikamp-de Jong I."/>
            <person name="Jeffries A.C."/>
            <person name="Kozera C.J."/>
            <person name="Medina N."/>
            <person name="Peng X."/>
            <person name="Thi-Ngoc H.P."/>
            <person name="Redder P."/>
            <person name="Schenk M.E."/>
            <person name="Theriault C."/>
            <person name="Tolstrup N."/>
            <person name="Charlebois R.L."/>
            <person name="Doolittle W.F."/>
            <person name="Duguet M."/>
            <person name="Gaasterland T."/>
            <person name="Garrett R.A."/>
            <person name="Ragan M.A."/>
            <person name="Sensen C.W."/>
            <person name="Van der Oost J."/>
        </authorList>
    </citation>
    <scope>NUCLEOTIDE SEQUENCE [LARGE SCALE GENOMIC DNA]</scope>
    <source>
        <strain>ATCC 35092 / DSM 1617 / JCM 11322 / P2</strain>
    </source>
</reference>
<reference key="3">
    <citation type="journal article" date="1995" name="Biochem. Biophys. Res. Commun.">
        <title>In the thermophilic archaeon Sulfolobus solfataricus a DNA-binding protein is in vitro (ADPribosyl)ated.</title>
        <authorList>
            <person name="Faraone-Mennella M.R."/>
            <person name="Farina B."/>
        </authorList>
    </citation>
    <scope>PROTEIN SEQUENCE OF 2-40</scope>
    <scope>DNA-BINDING</scope>
    <source>
        <strain>DSM 5833 / MT-4</strain>
    </source>
</reference>
<feature type="initiator methionine" description="Removed" evidence="2 3">
    <location>
        <position position="1"/>
    </location>
</feature>
<feature type="chain" id="PRO_0000213077" description="DNA-binding protein 7a">
    <location>
        <begin position="2"/>
        <end position="64"/>
    </location>
</feature>
<feature type="modified residue" description="N6-methyllysine; partial" evidence="3">
    <location>
        <position position="5"/>
    </location>
</feature>
<feature type="modified residue" description="N6-methyllysine; partial" evidence="3">
    <location>
        <position position="7"/>
    </location>
</feature>
<feature type="strand" evidence="9">
    <location>
        <begin position="4"/>
        <end position="8"/>
    </location>
</feature>
<feature type="strand" evidence="9">
    <location>
        <begin position="11"/>
        <end position="15"/>
    </location>
</feature>
<feature type="helix" evidence="9">
    <location>
        <begin position="17"/>
        <end position="19"/>
    </location>
</feature>
<feature type="strand" evidence="9">
    <location>
        <begin position="22"/>
        <end position="26"/>
    </location>
</feature>
<feature type="strand" evidence="9">
    <location>
        <begin position="29"/>
        <end position="34"/>
    </location>
</feature>
<feature type="strand" evidence="8">
    <location>
        <begin position="37"/>
        <end position="39"/>
    </location>
</feature>
<feature type="strand" evidence="9">
    <location>
        <begin position="44"/>
        <end position="47"/>
    </location>
</feature>
<feature type="turn" evidence="9">
    <location>
        <begin position="48"/>
        <end position="50"/>
    </location>
</feature>
<feature type="helix" evidence="9">
    <location>
        <begin position="53"/>
        <end position="61"/>
    </location>
</feature>
<evidence type="ECO:0000250" key="1">
    <source>
        <dbReference type="UniProtKB" id="P61990"/>
    </source>
</evidence>
<evidence type="ECO:0000269" key="2">
    <source>
    </source>
</evidence>
<evidence type="ECO:0000269" key="3">
    <source>
    </source>
</evidence>
<evidence type="ECO:0000303" key="4">
    <source>
    </source>
</evidence>
<evidence type="ECO:0000303" key="5">
    <source>
    </source>
</evidence>
<evidence type="ECO:0000305" key="6"/>
<evidence type="ECO:0000305" key="7">
    <source>
    </source>
</evidence>
<evidence type="ECO:0007829" key="8">
    <source>
        <dbReference type="PDB" id="1B4O"/>
    </source>
</evidence>
<evidence type="ECO:0007829" key="9">
    <source>
        <dbReference type="PDB" id="6QBA"/>
    </source>
</evidence>
<comment type="function">
    <text evidence="1 3 7">Can constrain negative DNA supercoils (By similarity). May be involved in maintaining the integrity of the genome at high temperature (Probable) (PubMed:7887965). Has RNA endonuclease activity with a narrow substrate specificity; the cleavage products are 3'-phosphooligonucleotides (PubMed:8425540).</text>
</comment>
<comment type="subunit">
    <text evidence="3">Homodimer.</text>
</comment>
<comment type="PTM">
    <text evidence="3">Lys-5 and Lys-7 were found to be 60% monomethylated (PubMed:8425540).</text>
</comment>
<comment type="PTM">
    <text evidence="2">ADP-ribosylated by endogenous proteins in vitro (PubMed:7887965).</text>
</comment>
<comment type="similarity">
    <text evidence="6">Belongs to the 7 kDa DNA-binding/endoribonuclease P2 family.</text>
</comment>